<organism>
    <name type="scientific">Escherichia coli O17:K52:H18 (strain UMN026 / ExPEC)</name>
    <dbReference type="NCBI Taxonomy" id="585056"/>
    <lineage>
        <taxon>Bacteria</taxon>
        <taxon>Pseudomonadati</taxon>
        <taxon>Pseudomonadota</taxon>
        <taxon>Gammaproteobacteria</taxon>
        <taxon>Enterobacterales</taxon>
        <taxon>Enterobacteriaceae</taxon>
        <taxon>Escherichia</taxon>
    </lineage>
</organism>
<comment type="function">
    <text evidence="1">Dual-function protein that regulates the transcription of class 2 flagellar operons and that also acts as an export chaperone for the filament-capping protein FliD. As a transcriptional regulator, acts as an anti-FlhDC factor; it directly binds FlhC, thus inhibiting the binding of the FlhC/FlhD complex to class 2 promoters, resulting in decreased expression of class 2 flagellar operons. As a chaperone, effects FliD transition to the membrane by preventing its premature polymerization, and by directing it to the export apparatus.</text>
</comment>
<comment type="subunit">
    <text evidence="1">Homodimer. Interacts with FliD and FlhC.</text>
</comment>
<comment type="subcellular location">
    <subcellularLocation>
        <location evidence="1">Cytoplasm</location>
        <location evidence="1">Cytosol</location>
    </subcellularLocation>
</comment>
<comment type="similarity">
    <text evidence="1">Belongs to the FliT family.</text>
</comment>
<dbReference type="EMBL" id="CU928163">
    <property type="protein sequence ID" value="CAR13411.1"/>
    <property type="molecule type" value="Genomic_DNA"/>
</dbReference>
<dbReference type="RefSeq" id="WP_001057842.1">
    <property type="nucleotide sequence ID" value="NC_011751.1"/>
</dbReference>
<dbReference type="RefSeq" id="YP_002412940.1">
    <property type="nucleotide sequence ID" value="NC_011751.1"/>
</dbReference>
<dbReference type="SMR" id="B7NBS1"/>
<dbReference type="STRING" id="585056.ECUMN_2218"/>
<dbReference type="KEGG" id="eum:ECUMN_2218"/>
<dbReference type="PATRIC" id="fig|585056.7.peg.2408"/>
<dbReference type="HOGENOM" id="CLU_155793_1_1_6"/>
<dbReference type="Proteomes" id="UP000007097">
    <property type="component" value="Chromosome"/>
</dbReference>
<dbReference type="GO" id="GO:0005829">
    <property type="term" value="C:cytosol"/>
    <property type="evidence" value="ECO:0007669"/>
    <property type="project" value="UniProtKB-SubCell"/>
</dbReference>
<dbReference type="GO" id="GO:0044781">
    <property type="term" value="P:bacterial-type flagellum organization"/>
    <property type="evidence" value="ECO:0007669"/>
    <property type="project" value="UniProtKB-KW"/>
</dbReference>
<dbReference type="GO" id="GO:1902209">
    <property type="term" value="P:negative regulation of bacterial-type flagellum assembly"/>
    <property type="evidence" value="ECO:0007669"/>
    <property type="project" value="UniProtKB-UniRule"/>
</dbReference>
<dbReference type="GO" id="GO:0006457">
    <property type="term" value="P:protein folding"/>
    <property type="evidence" value="ECO:0007669"/>
    <property type="project" value="UniProtKB-UniRule"/>
</dbReference>
<dbReference type="FunFam" id="1.20.58.380:FF:000001">
    <property type="entry name" value="Flagellar protein FliT"/>
    <property type="match status" value="1"/>
</dbReference>
<dbReference type="Gene3D" id="1.20.58.380">
    <property type="entry name" value="Flagellar protein flit"/>
    <property type="match status" value="1"/>
</dbReference>
<dbReference type="HAMAP" id="MF_01180">
    <property type="entry name" value="FliT"/>
    <property type="match status" value="1"/>
</dbReference>
<dbReference type="InterPro" id="IPR008622">
    <property type="entry name" value="FliT"/>
</dbReference>
<dbReference type="NCBIfam" id="NF007836">
    <property type="entry name" value="PRK10548.1"/>
    <property type="match status" value="1"/>
</dbReference>
<dbReference type="Pfam" id="PF05400">
    <property type="entry name" value="FliT"/>
    <property type="match status" value="1"/>
</dbReference>
<proteinExistence type="inferred from homology"/>
<keyword id="KW-1005">Bacterial flagellum biogenesis</keyword>
<keyword id="KW-0143">Chaperone</keyword>
<keyword id="KW-0963">Cytoplasm</keyword>
<keyword id="KW-0678">Repressor</keyword>
<keyword id="KW-0804">Transcription</keyword>
<keyword id="KW-0805">Transcription regulation</keyword>
<evidence type="ECO:0000255" key="1">
    <source>
        <dbReference type="HAMAP-Rule" id="MF_01180"/>
    </source>
</evidence>
<sequence length="121" mass="13801">MNNAPHLYFAWQQLVEKSQLMLRLATEEQWDELIASEMAYVNAVQEIAHLTEEVEPSTTMQEQLRPMLHLILDNESKVKQLLQIRMDELAKLVGQSSVQKSVLSAYGDQGGFVLAPQDNLF</sequence>
<name>FLIT_ECOLU</name>
<reference key="1">
    <citation type="journal article" date="2009" name="PLoS Genet.">
        <title>Organised genome dynamics in the Escherichia coli species results in highly diverse adaptive paths.</title>
        <authorList>
            <person name="Touchon M."/>
            <person name="Hoede C."/>
            <person name="Tenaillon O."/>
            <person name="Barbe V."/>
            <person name="Baeriswyl S."/>
            <person name="Bidet P."/>
            <person name="Bingen E."/>
            <person name="Bonacorsi S."/>
            <person name="Bouchier C."/>
            <person name="Bouvet O."/>
            <person name="Calteau A."/>
            <person name="Chiapello H."/>
            <person name="Clermont O."/>
            <person name="Cruveiller S."/>
            <person name="Danchin A."/>
            <person name="Diard M."/>
            <person name="Dossat C."/>
            <person name="Karoui M.E."/>
            <person name="Frapy E."/>
            <person name="Garry L."/>
            <person name="Ghigo J.M."/>
            <person name="Gilles A.M."/>
            <person name="Johnson J."/>
            <person name="Le Bouguenec C."/>
            <person name="Lescat M."/>
            <person name="Mangenot S."/>
            <person name="Martinez-Jehanne V."/>
            <person name="Matic I."/>
            <person name="Nassif X."/>
            <person name="Oztas S."/>
            <person name="Petit M.A."/>
            <person name="Pichon C."/>
            <person name="Rouy Z."/>
            <person name="Ruf C.S."/>
            <person name="Schneider D."/>
            <person name="Tourret J."/>
            <person name="Vacherie B."/>
            <person name="Vallenet D."/>
            <person name="Medigue C."/>
            <person name="Rocha E.P.C."/>
            <person name="Denamur E."/>
        </authorList>
    </citation>
    <scope>NUCLEOTIDE SEQUENCE [LARGE SCALE GENOMIC DNA]</scope>
    <source>
        <strain>UMN026 / ExPEC</strain>
    </source>
</reference>
<accession>B7NBS1</accession>
<gene>
    <name evidence="1" type="primary">fliT</name>
    <name type="ordered locus">ECUMN_2218</name>
</gene>
<feature type="chain" id="PRO_1000138179" description="Flagellar protein FliT">
    <location>
        <begin position="1"/>
        <end position="121"/>
    </location>
</feature>
<feature type="region of interest" description="Required for homodimerization" evidence="1">
    <location>
        <begin position="1"/>
        <end position="50"/>
    </location>
</feature>
<feature type="region of interest" description="FliD binding" evidence="1">
    <location>
        <begin position="60"/>
        <end position="98"/>
    </location>
</feature>
<protein>
    <recommendedName>
        <fullName evidence="1">Flagellar protein FliT</fullName>
    </recommendedName>
</protein>